<organism>
    <name type="scientific">Clostridium kluyveri (strain NBRC 12016)</name>
    <dbReference type="NCBI Taxonomy" id="583346"/>
    <lineage>
        <taxon>Bacteria</taxon>
        <taxon>Bacillati</taxon>
        <taxon>Bacillota</taxon>
        <taxon>Clostridia</taxon>
        <taxon>Eubacteriales</taxon>
        <taxon>Clostridiaceae</taxon>
        <taxon>Clostridium</taxon>
    </lineage>
</organism>
<proteinExistence type="inferred from homology"/>
<evidence type="ECO:0000255" key="1">
    <source>
        <dbReference type="HAMAP-Rule" id="MF_00489"/>
    </source>
</evidence>
<accession>B9DWN6</accession>
<comment type="similarity">
    <text evidence="1">Belongs to the UPF0178 family.</text>
</comment>
<sequence length="152" mass="17312">MRILIDGDACPGKYIIENIARENDIEVIIYCDTNHILKSNYSTVVTVDSGFQSVDMVIVNKVRSGDIVVSQDYGVAAMVLGKKAYAINPKGYIYHEGNMDKLLFERYISSKVRRTGGRTSNPKKRTKEDDKRLRENLFQLILNGKVYKGEDW</sequence>
<reference key="1">
    <citation type="submission" date="2005-09" db="EMBL/GenBank/DDBJ databases">
        <title>Complete genome sequence of Clostridium kluyveri and comparative genomics of Clostridia species.</title>
        <authorList>
            <person name="Inui M."/>
            <person name="Nonaka H."/>
            <person name="Shinoda Y."/>
            <person name="Ikenaga Y."/>
            <person name="Abe M."/>
            <person name="Naito K."/>
            <person name="Vertes A.A."/>
            <person name="Yukawa H."/>
        </authorList>
    </citation>
    <scope>NUCLEOTIDE SEQUENCE [LARGE SCALE GENOMIC DNA]</scope>
    <source>
        <strain>NBRC 12016</strain>
    </source>
</reference>
<protein>
    <recommendedName>
        <fullName evidence="1">UPF0178 protein CKR_3078</fullName>
    </recommendedName>
</protein>
<name>Y3078_CLOK1</name>
<feature type="chain" id="PRO_1000197830" description="UPF0178 protein CKR_3078">
    <location>
        <begin position="1"/>
        <end position="152"/>
    </location>
</feature>
<gene>
    <name type="ordered locus">CKR_3078</name>
</gene>
<dbReference type="EMBL" id="AP009049">
    <property type="protein sequence ID" value="BAH08129.1"/>
    <property type="molecule type" value="Genomic_DNA"/>
</dbReference>
<dbReference type="RefSeq" id="WP_012103812.1">
    <property type="nucleotide sequence ID" value="NC_011837.1"/>
</dbReference>
<dbReference type="KEGG" id="ckr:CKR_3078"/>
<dbReference type="HOGENOM" id="CLU_106619_0_0_9"/>
<dbReference type="Proteomes" id="UP000007969">
    <property type="component" value="Chromosome"/>
</dbReference>
<dbReference type="HAMAP" id="MF_00489">
    <property type="entry name" value="UPF0178"/>
    <property type="match status" value="1"/>
</dbReference>
<dbReference type="InterPro" id="IPR003791">
    <property type="entry name" value="UPF0178"/>
</dbReference>
<dbReference type="NCBIfam" id="NF001095">
    <property type="entry name" value="PRK00124.1"/>
    <property type="match status" value="1"/>
</dbReference>
<dbReference type="PANTHER" id="PTHR35146">
    <property type="entry name" value="UPF0178 PROTEIN YAII"/>
    <property type="match status" value="1"/>
</dbReference>
<dbReference type="PANTHER" id="PTHR35146:SF1">
    <property type="entry name" value="UPF0178 PROTEIN YAII"/>
    <property type="match status" value="1"/>
</dbReference>
<dbReference type="Pfam" id="PF02639">
    <property type="entry name" value="DUF188"/>
    <property type="match status" value="1"/>
</dbReference>